<sequence length="441" mass="49099">MAAHFSGALQLTNLDDFITPSQECIKPVKIEKKPGAKGLAKIKIESDGSYVQLSEDGGKSKLQKAEITLNDCLACSGCITTAESVLITQQSQDELFKILDSNRKLVKEGKGDVQKLVVISISPQSRASIAAKFNLTINDAAKKLSAFFKQLGVHYVFDTTFARDFSLAESQREFVRRFRAYQQGDEGCTPMLASACPGWMCYAEKTHGDYILPYISSTKSPQQIMGSLVKDHLASVVGKSPDSVYHVCVMPCFDKKLEASRDDFYNDMYSTRDVDCVISTVEVETMIQDHCPDFNSIDPVELDKLYCSSDSGDFFGHSGGGSGGFLEHIFKYASRELFDEKVDVLTYKTLRNKDFREVTLQVDGKDVLKFAAAYGFRNIQNLVQKLKRGKSPYHFVEVMACPSGLKFLAQDLFGPTFYPTLEPRSLEKNVQQKNGVSCIFI</sequence>
<organism>
    <name type="scientific">Nematostella vectensis</name>
    <name type="common">Starlet sea anemone</name>
    <dbReference type="NCBI Taxonomy" id="45351"/>
    <lineage>
        <taxon>Eukaryota</taxon>
        <taxon>Metazoa</taxon>
        <taxon>Cnidaria</taxon>
        <taxon>Anthozoa</taxon>
        <taxon>Hexacorallia</taxon>
        <taxon>Actiniaria</taxon>
        <taxon>Edwardsiidae</taxon>
        <taxon>Nematostella</taxon>
    </lineage>
</organism>
<comment type="function">
    <text evidence="1">Component of the cytosolic iron-sulfur (Fe/S) protein assembly machinery. Required for maturation of extramitochondrial Fe/S proteins (By similarity).</text>
</comment>
<comment type="similarity">
    <text evidence="3">Belongs to the NARF family.</text>
</comment>
<evidence type="ECO:0000250" key="1"/>
<evidence type="ECO:0000255" key="2"/>
<evidence type="ECO:0000305" key="3"/>
<gene>
    <name type="ORF">v1g210509</name>
</gene>
<dbReference type="EMBL" id="DS469629">
    <property type="protein sequence ID" value="EDO38275.1"/>
    <property type="molecule type" value="Genomic_DNA"/>
</dbReference>
<dbReference type="RefSeq" id="XP_001630338.1">
    <property type="nucleotide sequence ID" value="XM_001630288.1"/>
</dbReference>
<dbReference type="SMR" id="A7SDA8"/>
<dbReference type="STRING" id="45351.A7SDA8"/>
<dbReference type="EnsemblMetazoa" id="EDO38275">
    <property type="protein sequence ID" value="EDO38275"/>
    <property type="gene ID" value="NEMVEDRAFT_v1g210509"/>
</dbReference>
<dbReference type="eggNOG" id="KOG2439">
    <property type="taxonomic scope" value="Eukaryota"/>
</dbReference>
<dbReference type="HOGENOM" id="CLU_018240_0_0_1"/>
<dbReference type="InParanoid" id="A7SDA8"/>
<dbReference type="OMA" id="GYLHHVL"/>
<dbReference type="PhylomeDB" id="A7SDA8"/>
<dbReference type="Proteomes" id="UP000001593">
    <property type="component" value="Unassembled WGS sequence"/>
</dbReference>
<dbReference type="GO" id="GO:0097361">
    <property type="term" value="C:cytosolic [4Fe-4S] assembly targeting complex"/>
    <property type="evidence" value="ECO:0000318"/>
    <property type="project" value="GO_Central"/>
</dbReference>
<dbReference type="GO" id="GO:0051539">
    <property type="term" value="F:4 iron, 4 sulfur cluster binding"/>
    <property type="evidence" value="ECO:0007669"/>
    <property type="project" value="UniProtKB-KW"/>
</dbReference>
<dbReference type="GO" id="GO:0046872">
    <property type="term" value="F:metal ion binding"/>
    <property type="evidence" value="ECO:0007669"/>
    <property type="project" value="UniProtKB-KW"/>
</dbReference>
<dbReference type="GO" id="GO:0016226">
    <property type="term" value="P:iron-sulfur cluster assembly"/>
    <property type="evidence" value="ECO:0000250"/>
    <property type="project" value="UniProtKB"/>
</dbReference>
<dbReference type="Gene3D" id="3.40.50.1780">
    <property type="match status" value="1"/>
</dbReference>
<dbReference type="Gene3D" id="3.40.950.10">
    <property type="entry name" value="Fe-only Hydrogenase (Larger Subunit), Chain L, domain 3"/>
    <property type="match status" value="1"/>
</dbReference>
<dbReference type="InterPro" id="IPR050340">
    <property type="entry name" value="Cytosolic_Fe-S_CAF"/>
</dbReference>
<dbReference type="InterPro" id="IPR009016">
    <property type="entry name" value="Fe_hydrogenase"/>
</dbReference>
<dbReference type="InterPro" id="IPR004108">
    <property type="entry name" value="Fe_hydrogenase_lsu_C"/>
</dbReference>
<dbReference type="PANTHER" id="PTHR11615">
    <property type="entry name" value="NITRATE, FORMATE, IRON DEHYDROGENASE"/>
    <property type="match status" value="1"/>
</dbReference>
<dbReference type="Pfam" id="PF02906">
    <property type="entry name" value="Fe_hyd_lg_C"/>
    <property type="match status" value="1"/>
</dbReference>
<dbReference type="SUPFAM" id="SSF53920">
    <property type="entry name" value="Fe-only hydrogenase"/>
    <property type="match status" value="1"/>
</dbReference>
<accession>A7SDA8</accession>
<feature type="chain" id="PRO_0000383711" description="Probable cytosolic Fe-S cluster assembly factor v1g210509">
    <location>
        <begin position="1"/>
        <end position="441"/>
    </location>
</feature>
<feature type="binding site" evidence="2">
    <location>
        <position position="24"/>
    </location>
    <ligand>
        <name>[4Fe-4S] cluster</name>
        <dbReference type="ChEBI" id="CHEBI:49883"/>
        <label>1</label>
    </ligand>
</feature>
<feature type="binding site" evidence="2">
    <location>
        <position position="72"/>
    </location>
    <ligand>
        <name>[4Fe-4S] cluster</name>
        <dbReference type="ChEBI" id="CHEBI:49883"/>
        <label>1</label>
    </ligand>
</feature>
<feature type="binding site" evidence="2">
    <location>
        <position position="75"/>
    </location>
    <ligand>
        <name>[4Fe-4S] cluster</name>
        <dbReference type="ChEBI" id="CHEBI:49883"/>
        <label>1</label>
    </ligand>
</feature>
<feature type="binding site" evidence="2">
    <location>
        <position position="78"/>
    </location>
    <ligand>
        <name>[4Fe-4S] cluster</name>
        <dbReference type="ChEBI" id="CHEBI:49883"/>
        <label>1</label>
    </ligand>
</feature>
<feature type="binding site" evidence="2">
    <location>
        <position position="196"/>
    </location>
    <ligand>
        <name>[4Fe-4S] cluster</name>
        <dbReference type="ChEBI" id="CHEBI:49883"/>
        <label>2</label>
    </ligand>
</feature>
<feature type="binding site" evidence="2">
    <location>
        <position position="252"/>
    </location>
    <ligand>
        <name>[4Fe-4S] cluster</name>
        <dbReference type="ChEBI" id="CHEBI:49883"/>
        <label>2</label>
    </ligand>
</feature>
<feature type="binding site" evidence="2">
    <location>
        <position position="401"/>
    </location>
    <ligand>
        <name>[4Fe-4S] cluster</name>
        <dbReference type="ChEBI" id="CHEBI:49883"/>
        <label>2</label>
    </ligand>
</feature>
<protein>
    <recommendedName>
        <fullName>Probable cytosolic Fe-S cluster assembly factor v1g210509</fullName>
    </recommendedName>
</protein>
<keyword id="KW-0004">4Fe-4S</keyword>
<keyword id="KW-0408">Iron</keyword>
<keyword id="KW-0411">Iron-sulfur</keyword>
<keyword id="KW-0479">Metal-binding</keyword>
<keyword id="KW-1185">Reference proteome</keyword>
<name>NARF_NEMVE</name>
<proteinExistence type="inferred from homology"/>
<reference key="1">
    <citation type="journal article" date="2007" name="Science">
        <title>Sea anemone genome reveals ancestral eumetazoan gene repertoire and genomic organization.</title>
        <authorList>
            <person name="Putnam N.H."/>
            <person name="Srivastava M."/>
            <person name="Hellsten U."/>
            <person name="Dirks B."/>
            <person name="Chapman J."/>
            <person name="Salamov A."/>
            <person name="Terry A."/>
            <person name="Shapiro H."/>
            <person name="Lindquist E."/>
            <person name="Kapitonov V.V."/>
            <person name="Jurka J."/>
            <person name="Genikhovich G."/>
            <person name="Grigoriev I.V."/>
            <person name="Lucas S.M."/>
            <person name="Steele R.E."/>
            <person name="Finnerty J.R."/>
            <person name="Technau U."/>
            <person name="Martindale M.Q."/>
            <person name="Rokhsar D.S."/>
        </authorList>
    </citation>
    <scope>NUCLEOTIDE SEQUENCE [LARGE SCALE GENOMIC DNA]</scope>
    <source>
        <strain>CH2 X CH6</strain>
    </source>
</reference>